<dbReference type="EMBL" id="CP001275">
    <property type="protein sequence ID" value="ACM05728.1"/>
    <property type="molecule type" value="Genomic_DNA"/>
</dbReference>
<dbReference type="RefSeq" id="WP_012642020.1">
    <property type="nucleotide sequence ID" value="NC_011959.1"/>
</dbReference>
<dbReference type="SMR" id="B9KYS0"/>
<dbReference type="STRING" id="309801.trd_0624"/>
<dbReference type="KEGG" id="tro:trd_0624"/>
<dbReference type="eggNOG" id="COG0184">
    <property type="taxonomic scope" value="Bacteria"/>
</dbReference>
<dbReference type="HOGENOM" id="CLU_148518_0_0_0"/>
<dbReference type="OrthoDB" id="9799262at2"/>
<dbReference type="Proteomes" id="UP000000447">
    <property type="component" value="Chromosome"/>
</dbReference>
<dbReference type="GO" id="GO:0022627">
    <property type="term" value="C:cytosolic small ribosomal subunit"/>
    <property type="evidence" value="ECO:0007669"/>
    <property type="project" value="TreeGrafter"/>
</dbReference>
<dbReference type="GO" id="GO:0019843">
    <property type="term" value="F:rRNA binding"/>
    <property type="evidence" value="ECO:0007669"/>
    <property type="project" value="UniProtKB-UniRule"/>
</dbReference>
<dbReference type="GO" id="GO:0003735">
    <property type="term" value="F:structural constituent of ribosome"/>
    <property type="evidence" value="ECO:0007669"/>
    <property type="project" value="InterPro"/>
</dbReference>
<dbReference type="GO" id="GO:0006412">
    <property type="term" value="P:translation"/>
    <property type="evidence" value="ECO:0007669"/>
    <property type="project" value="UniProtKB-UniRule"/>
</dbReference>
<dbReference type="CDD" id="cd00353">
    <property type="entry name" value="Ribosomal_S15p_S13e"/>
    <property type="match status" value="1"/>
</dbReference>
<dbReference type="FunFam" id="1.10.287.10:FF:000002">
    <property type="entry name" value="30S ribosomal protein S15"/>
    <property type="match status" value="1"/>
</dbReference>
<dbReference type="Gene3D" id="6.10.250.3130">
    <property type="match status" value="1"/>
</dbReference>
<dbReference type="Gene3D" id="1.10.287.10">
    <property type="entry name" value="S15/NS1, RNA-binding"/>
    <property type="match status" value="1"/>
</dbReference>
<dbReference type="HAMAP" id="MF_01343_B">
    <property type="entry name" value="Ribosomal_uS15_B"/>
    <property type="match status" value="1"/>
</dbReference>
<dbReference type="InterPro" id="IPR000589">
    <property type="entry name" value="Ribosomal_uS15"/>
</dbReference>
<dbReference type="InterPro" id="IPR005290">
    <property type="entry name" value="Ribosomal_uS15_bac-type"/>
</dbReference>
<dbReference type="InterPro" id="IPR009068">
    <property type="entry name" value="uS15_NS1_RNA-bd_sf"/>
</dbReference>
<dbReference type="NCBIfam" id="TIGR00952">
    <property type="entry name" value="S15_bact"/>
    <property type="match status" value="1"/>
</dbReference>
<dbReference type="PANTHER" id="PTHR23321">
    <property type="entry name" value="RIBOSOMAL PROTEIN S15, BACTERIAL AND ORGANELLAR"/>
    <property type="match status" value="1"/>
</dbReference>
<dbReference type="PANTHER" id="PTHR23321:SF26">
    <property type="entry name" value="SMALL RIBOSOMAL SUBUNIT PROTEIN US15M"/>
    <property type="match status" value="1"/>
</dbReference>
<dbReference type="Pfam" id="PF00312">
    <property type="entry name" value="Ribosomal_S15"/>
    <property type="match status" value="1"/>
</dbReference>
<dbReference type="SMART" id="SM01387">
    <property type="entry name" value="Ribosomal_S15"/>
    <property type="match status" value="1"/>
</dbReference>
<dbReference type="SUPFAM" id="SSF47060">
    <property type="entry name" value="S15/NS1 RNA-binding domain"/>
    <property type="match status" value="1"/>
</dbReference>
<dbReference type="PROSITE" id="PS00362">
    <property type="entry name" value="RIBOSOMAL_S15"/>
    <property type="match status" value="1"/>
</dbReference>
<keyword id="KW-1185">Reference proteome</keyword>
<keyword id="KW-0687">Ribonucleoprotein</keyword>
<keyword id="KW-0689">Ribosomal protein</keyword>
<keyword id="KW-0694">RNA-binding</keyword>
<keyword id="KW-0699">rRNA-binding</keyword>
<evidence type="ECO:0000255" key="1">
    <source>
        <dbReference type="HAMAP-Rule" id="MF_01343"/>
    </source>
</evidence>
<evidence type="ECO:0000305" key="2"/>
<sequence length="89" mass="10607">MALYKAQKAAIIEQFRQHENDTGSTEVQVALLTERINILTEHLREHKHDYHSRRGLMKLVGQRRRLLRYLKRTDAQRYQALIQRLGLRG</sequence>
<proteinExistence type="inferred from homology"/>
<reference key="1">
    <citation type="journal article" date="2009" name="PLoS ONE">
        <title>Complete genome sequence of the aerobic CO-oxidizing thermophile Thermomicrobium roseum.</title>
        <authorList>
            <person name="Wu D."/>
            <person name="Raymond J."/>
            <person name="Wu M."/>
            <person name="Chatterji S."/>
            <person name="Ren Q."/>
            <person name="Graham J.E."/>
            <person name="Bryant D.A."/>
            <person name="Robb F."/>
            <person name="Colman A."/>
            <person name="Tallon L.J."/>
            <person name="Badger J.H."/>
            <person name="Madupu R."/>
            <person name="Ward N.L."/>
            <person name="Eisen J.A."/>
        </authorList>
    </citation>
    <scope>NUCLEOTIDE SEQUENCE [LARGE SCALE GENOMIC DNA]</scope>
    <source>
        <strain>ATCC 27502 / DSM 5159 / P-2</strain>
    </source>
</reference>
<feature type="chain" id="PRO_1000166445" description="Small ribosomal subunit protein uS15">
    <location>
        <begin position="1"/>
        <end position="89"/>
    </location>
</feature>
<name>RS15_THERP</name>
<gene>
    <name evidence="1" type="primary">rpsO</name>
    <name type="ordered locus">trd_0624</name>
</gene>
<comment type="function">
    <text evidence="1">One of the primary rRNA binding proteins, it binds directly to 16S rRNA where it helps nucleate assembly of the platform of the 30S subunit by binding and bridging several RNA helices of the 16S rRNA.</text>
</comment>
<comment type="function">
    <text evidence="1">Forms an intersubunit bridge (bridge B4) with the 23S rRNA of the 50S subunit in the ribosome.</text>
</comment>
<comment type="subunit">
    <text evidence="1">Part of the 30S ribosomal subunit. Forms a bridge to the 50S subunit in the 70S ribosome, contacting the 23S rRNA.</text>
</comment>
<comment type="similarity">
    <text evidence="1">Belongs to the universal ribosomal protein uS15 family.</text>
</comment>
<organism>
    <name type="scientific">Thermomicrobium roseum (strain ATCC 27502 / DSM 5159 / P-2)</name>
    <dbReference type="NCBI Taxonomy" id="309801"/>
    <lineage>
        <taxon>Bacteria</taxon>
        <taxon>Pseudomonadati</taxon>
        <taxon>Thermomicrobiota</taxon>
        <taxon>Thermomicrobia</taxon>
        <taxon>Thermomicrobiales</taxon>
        <taxon>Thermomicrobiaceae</taxon>
        <taxon>Thermomicrobium</taxon>
    </lineage>
</organism>
<accession>B9KYS0</accession>
<protein>
    <recommendedName>
        <fullName evidence="1">Small ribosomal subunit protein uS15</fullName>
    </recommendedName>
    <alternativeName>
        <fullName evidence="2">30S ribosomal protein S15</fullName>
    </alternativeName>
</protein>